<keyword id="KW-1185">Reference proteome</keyword>
<keyword id="KW-0686">Riboflavin biosynthesis</keyword>
<keyword id="KW-0808">Transferase</keyword>
<organism>
    <name type="scientific">Archaeoglobus fulgidus (strain ATCC 49558 / DSM 4304 / JCM 9628 / NBRC 100126 / VC-16)</name>
    <dbReference type="NCBI Taxonomy" id="224325"/>
    <lineage>
        <taxon>Archaea</taxon>
        <taxon>Methanobacteriati</taxon>
        <taxon>Methanobacteriota</taxon>
        <taxon>Archaeoglobi</taxon>
        <taxon>Archaeoglobales</taxon>
        <taxon>Archaeoglobaceae</taxon>
        <taxon>Archaeoglobus</taxon>
    </lineage>
</organism>
<comment type="catalytic activity">
    <reaction>
        <text>2 6,7-dimethyl-8-(1-D-ribityl)lumazine + H(+) = 5-amino-6-(D-ribitylamino)uracil + riboflavin</text>
        <dbReference type="Rhea" id="RHEA:20772"/>
        <dbReference type="ChEBI" id="CHEBI:15378"/>
        <dbReference type="ChEBI" id="CHEBI:15934"/>
        <dbReference type="ChEBI" id="CHEBI:57986"/>
        <dbReference type="ChEBI" id="CHEBI:58201"/>
        <dbReference type="EC" id="2.5.1.9"/>
    </reaction>
</comment>
<comment type="pathway">
    <text>Cofactor biosynthesis; riboflavin biosynthesis; riboflavin from 2-hydroxy-3-oxobutyl phosphate and 5-amino-6-(D-ribitylamino)uracil: step 2/2.</text>
</comment>
<comment type="similarity">
    <text evidence="1">Belongs to the DMRL synthase family.</text>
</comment>
<reference key="1">
    <citation type="journal article" date="1997" name="Nature">
        <title>The complete genome sequence of the hyperthermophilic, sulphate-reducing archaeon Archaeoglobus fulgidus.</title>
        <authorList>
            <person name="Klenk H.-P."/>
            <person name="Clayton R.A."/>
            <person name="Tomb J.-F."/>
            <person name="White O."/>
            <person name="Nelson K.E."/>
            <person name="Ketchum K.A."/>
            <person name="Dodson R.J."/>
            <person name="Gwinn M.L."/>
            <person name="Hickey E.K."/>
            <person name="Peterson J.D."/>
            <person name="Richardson D.L."/>
            <person name="Kerlavage A.R."/>
            <person name="Graham D.E."/>
            <person name="Kyrpides N.C."/>
            <person name="Fleischmann R.D."/>
            <person name="Quackenbush J."/>
            <person name="Lee N.H."/>
            <person name="Sutton G.G."/>
            <person name="Gill S.R."/>
            <person name="Kirkness E.F."/>
            <person name="Dougherty B.A."/>
            <person name="McKenney K."/>
            <person name="Adams M.D."/>
            <person name="Loftus B.J."/>
            <person name="Peterson S.N."/>
            <person name="Reich C.I."/>
            <person name="McNeil L.K."/>
            <person name="Badger J.H."/>
            <person name="Glodek A."/>
            <person name="Zhou L."/>
            <person name="Overbeek R."/>
            <person name="Gocayne J.D."/>
            <person name="Weidman J.F."/>
            <person name="McDonald L.A."/>
            <person name="Utterback T.R."/>
            <person name="Cotton M.D."/>
            <person name="Spriggs T."/>
            <person name="Artiach P."/>
            <person name="Kaine B.P."/>
            <person name="Sykes S.M."/>
            <person name="Sadow P.W."/>
            <person name="D'Andrea K.P."/>
            <person name="Bowman C."/>
            <person name="Fujii C."/>
            <person name="Garland S.A."/>
            <person name="Mason T.M."/>
            <person name="Olsen G.J."/>
            <person name="Fraser C.M."/>
            <person name="Smith H.O."/>
            <person name="Woese C.R."/>
            <person name="Venter J.C."/>
        </authorList>
    </citation>
    <scope>NUCLEOTIDE SEQUENCE [LARGE SCALE GENOMIC DNA]</scope>
    <source>
        <strain>ATCC 49558 / DSM 4304 / JCM 9628 / NBRC 100126 / VC-16</strain>
    </source>
</reference>
<evidence type="ECO:0000305" key="1"/>
<accession>O28856</accession>
<sequence length="153" mass="17083">MKIGIADTTFSRINMGKIAIDELRKISSIPYERYTVPGIKDLPIAAKKLLEEKGCDIVITLGWVGGTQKDMLSYIVLSMGLVIVQLMTNKHVIDVTIHEDEAEDEKTLMMVAENRVREHVRNAVDLLVNPKRLQKLAGTGQRQGYPDVGPILK</sequence>
<gene>
    <name type="primary">ribC</name>
    <name type="ordered locus">AF_1416</name>
</gene>
<feature type="chain" id="PRO_0000134859" description="Riboflavin synthase">
    <location>
        <begin position="1"/>
        <end position="153"/>
    </location>
</feature>
<name>RISC_ARCFU</name>
<protein>
    <recommendedName>
        <fullName>Riboflavin synthase</fullName>
        <ecNumber>2.5.1.9</ecNumber>
    </recommendedName>
</protein>
<proteinExistence type="inferred from homology"/>
<dbReference type="EC" id="2.5.1.9"/>
<dbReference type="EMBL" id="AE000782">
    <property type="protein sequence ID" value="AAB89831.1"/>
    <property type="molecule type" value="Genomic_DNA"/>
</dbReference>
<dbReference type="PIR" id="G69426">
    <property type="entry name" value="G69426"/>
</dbReference>
<dbReference type="RefSeq" id="WP_010878913.1">
    <property type="nucleotide sequence ID" value="NC_000917.1"/>
</dbReference>
<dbReference type="SMR" id="O28856"/>
<dbReference type="STRING" id="224325.AF_1416"/>
<dbReference type="PaxDb" id="224325-AF_1416"/>
<dbReference type="DNASU" id="1484640"/>
<dbReference type="EnsemblBacteria" id="AAB89831">
    <property type="protein sequence ID" value="AAB89831"/>
    <property type="gene ID" value="AF_1416"/>
</dbReference>
<dbReference type="GeneID" id="24795028"/>
<dbReference type="KEGG" id="afu:AF_1416"/>
<dbReference type="eggNOG" id="arCOG01322">
    <property type="taxonomic scope" value="Archaea"/>
</dbReference>
<dbReference type="HOGENOM" id="CLU_1682776_0_0_2"/>
<dbReference type="OrthoDB" id="23911at2157"/>
<dbReference type="PhylomeDB" id="O28856"/>
<dbReference type="UniPathway" id="UPA00275">
    <property type="reaction ID" value="UER00405"/>
</dbReference>
<dbReference type="Proteomes" id="UP000002199">
    <property type="component" value="Chromosome"/>
</dbReference>
<dbReference type="GO" id="GO:0009349">
    <property type="term" value="C:riboflavin synthase complex"/>
    <property type="evidence" value="ECO:0007669"/>
    <property type="project" value="InterPro"/>
</dbReference>
<dbReference type="GO" id="GO:0004746">
    <property type="term" value="F:riboflavin synthase activity"/>
    <property type="evidence" value="ECO:0007669"/>
    <property type="project" value="UniProtKB-EC"/>
</dbReference>
<dbReference type="GO" id="GO:0009231">
    <property type="term" value="P:riboflavin biosynthetic process"/>
    <property type="evidence" value="ECO:0007669"/>
    <property type="project" value="UniProtKB-UniPathway"/>
</dbReference>
<dbReference type="CDD" id="cd09210">
    <property type="entry name" value="Riboflavin_synthase_archaeal"/>
    <property type="match status" value="1"/>
</dbReference>
<dbReference type="Gene3D" id="3.40.50.960">
    <property type="entry name" value="Lumazine/riboflavin synthase"/>
    <property type="match status" value="1"/>
</dbReference>
<dbReference type="InterPro" id="IPR002180">
    <property type="entry name" value="LS/RS"/>
</dbReference>
<dbReference type="InterPro" id="IPR036467">
    <property type="entry name" value="LS/RS_sf"/>
</dbReference>
<dbReference type="InterPro" id="IPR006399">
    <property type="entry name" value="Ribfl_synth_arc"/>
</dbReference>
<dbReference type="NCBIfam" id="TIGR01506">
    <property type="entry name" value="ribC_arch"/>
    <property type="match status" value="1"/>
</dbReference>
<dbReference type="Pfam" id="PF00885">
    <property type="entry name" value="DMRL_synthase"/>
    <property type="match status" value="1"/>
</dbReference>
<dbReference type="PIRSF" id="PIRSF015750">
    <property type="entry name" value="Ribfl_synth_arc"/>
    <property type="match status" value="1"/>
</dbReference>
<dbReference type="SUPFAM" id="SSF52121">
    <property type="entry name" value="Lumazine synthase"/>
    <property type="match status" value="1"/>
</dbReference>